<protein>
    <recommendedName>
        <fullName evidence="6">Large ribosomal subunit protein eL15B</fullName>
    </recommendedName>
    <alternativeName>
        <fullName evidence="7">60S ribosomal protein L15-B</fullName>
    </alternativeName>
    <alternativeName>
        <fullName>L13</fullName>
    </alternativeName>
    <alternativeName>
        <fullName>RP15R</fullName>
    </alternativeName>
    <alternativeName>
        <fullName>YL10</fullName>
    </alternativeName>
    <alternativeName>
        <fullName>YP18</fullName>
    </alternativeName>
</protein>
<comment type="function">
    <text evidence="9">Component of the ribosome, a large ribonucleoprotein complex responsible for the synthesis of proteins in the cell. The small ribosomal subunit (SSU) binds messenger RNAs (mRNAs) and translates the encoded message by selecting cognate aminoacyl-transfer RNA (tRNA) molecules. The large subunit (LSU) contains the ribosomal catalytic site termed the peptidyl transferase center (PTC), which catalyzes the formation of peptide bonds, thereby polymerizing the amino acids delivered by tRNAs into a polypeptide chain. The nascent polypeptides leave the ribosome through a tunnel in the LSU and interact with protein factors that function in enzymatic processing, targeting, and the membrane insertion of nascent chains at the exit of the ribosomal tunnel.</text>
</comment>
<comment type="subunit">
    <text evidence="4 10">Component of the large ribosomal subunit (LSU). Mature yeast ribosomes consist of a small (40S) and a large (60S) subunit. The 40S small subunit contains 1 molecule of ribosomal RNA (18S rRNA) and 33 different proteins (encoded by 57 genes). The large 60S subunit contains 3 rRNA molecules (25S, 5.8S and 5S rRNA) and 46 different proteins (encoded by 81 genes) (PubMed:22096102, PubMed:9559554).</text>
</comment>
<comment type="subcellular location">
    <subcellularLocation>
        <location evidence="4">Cytoplasm</location>
    </subcellularLocation>
</comment>
<comment type="miscellaneous">
    <text evidence="2">Present with 721 molecules/cell in log phase SD medium.</text>
</comment>
<comment type="miscellaneous">
    <text evidence="8">There are 2 genes for eL15 in yeast.</text>
</comment>
<comment type="similarity">
    <text evidence="8">Belongs to the eukaryotic ribosomal protein eL15 family.</text>
</comment>
<sequence length="204" mass="24422">MGAYKYLEELERKKQSDVLRFLQRVRVWEYRQKNVIHRAARPTRPDKARRLGYKAKQGFVIYRVRVRRGNRKRPVPKGATYGKPTNQGVNELKYQRSLRATAEERVGRRAANLRVLNSYWVNQDSTYKYFEVILVDPQHKAIRRDARYNWICNPVHKHREARGLTATGKKSRGINKGHKFNNTKAGRRKTWKRQNTLSLWRYRK</sequence>
<reference key="1">
    <citation type="journal article" date="1997" name="Nature">
        <title>The nucleotide sequence of Saccharomyces cerevisiae chromosome XIII.</title>
        <authorList>
            <person name="Bowman S."/>
            <person name="Churcher C.M."/>
            <person name="Badcock K."/>
            <person name="Brown D."/>
            <person name="Chillingworth T."/>
            <person name="Connor R."/>
            <person name="Dedman K."/>
            <person name="Devlin K."/>
            <person name="Gentles S."/>
            <person name="Hamlin N."/>
            <person name="Hunt S."/>
            <person name="Jagels K."/>
            <person name="Lye G."/>
            <person name="Moule S."/>
            <person name="Odell C."/>
            <person name="Pearson D."/>
            <person name="Rajandream M.A."/>
            <person name="Rice P."/>
            <person name="Skelton J."/>
            <person name="Walsh S.V."/>
            <person name="Whitehead S."/>
            <person name="Barrell B.G."/>
        </authorList>
    </citation>
    <scope>NUCLEOTIDE SEQUENCE [LARGE SCALE GENOMIC DNA]</scope>
    <source>
        <strain>ATCC 204508 / S288c</strain>
    </source>
</reference>
<reference key="2">
    <citation type="journal article" date="2014" name="G3 (Bethesda)">
        <title>The reference genome sequence of Saccharomyces cerevisiae: Then and now.</title>
        <authorList>
            <person name="Engel S.R."/>
            <person name="Dietrich F.S."/>
            <person name="Fisk D.G."/>
            <person name="Binkley G."/>
            <person name="Balakrishnan R."/>
            <person name="Costanzo M.C."/>
            <person name="Dwight S.S."/>
            <person name="Hitz B.C."/>
            <person name="Karra K."/>
            <person name="Nash R.S."/>
            <person name="Weng S."/>
            <person name="Wong E.D."/>
            <person name="Lloyd P."/>
            <person name="Skrzypek M.S."/>
            <person name="Miyasato S.R."/>
            <person name="Simison M."/>
            <person name="Cherry J.M."/>
        </authorList>
    </citation>
    <scope>GENOME REANNOTATION</scope>
    <source>
        <strain>ATCC 204508 / S288c</strain>
    </source>
</reference>
<reference key="3">
    <citation type="journal article" date="1982" name="Biochemistry">
        <title>Isolation of seventeen proteins and amino-terminal amino acid sequences of eight proteins from cytoplasmic ribosomes of yeast.</title>
        <authorList>
            <person name="Otaka E."/>
            <person name="Higo K."/>
            <person name="Osawa S."/>
        </authorList>
    </citation>
    <scope>PROTEIN SEQUENCE OF 2-44</scope>
</reference>
<reference key="4">
    <citation type="journal article" date="1992" name="J. Biol. Chem.">
        <title>NH2-terminal acetylation of ribosomal proteins of Saccharomyces cerevisiae.</title>
        <authorList>
            <person name="Takakura H."/>
            <person name="Tsunasawa S."/>
            <person name="Miyagi M."/>
            <person name="Warner J.R."/>
        </authorList>
    </citation>
    <scope>PROTEIN SEQUENCE OF 2-9</scope>
</reference>
<reference key="5">
    <citation type="journal article" date="1998" name="Yeast">
        <title>The list of cytoplasmic ribosomal proteins of Saccharomyces cerevisiae.</title>
        <authorList>
            <person name="Planta R.J."/>
            <person name="Mager W.H."/>
        </authorList>
    </citation>
    <scope>NOMENCLATURE</scope>
    <scope>SUBUNIT</scope>
</reference>
<reference key="6">
    <citation type="journal article" date="2003" name="Nature">
        <title>Global analysis of protein expression in yeast.</title>
        <authorList>
            <person name="Ghaemmaghami S."/>
            <person name="Huh W.-K."/>
            <person name="Bower K."/>
            <person name="Howson R.W."/>
            <person name="Belle A."/>
            <person name="Dephoure N."/>
            <person name="O'Shea E.K."/>
            <person name="Weissman J.S."/>
        </authorList>
    </citation>
    <scope>LEVEL OF PROTEIN EXPRESSION [LARGE SCALE ANALYSIS]</scope>
</reference>
<reference key="7">
    <citation type="journal article" date="2011" name="Science">
        <title>The structure of the eukaryotic ribosome at 3.0 A resolution.</title>
        <authorList>
            <person name="Ben-Shem A."/>
            <person name="Garreau de Loubresse N."/>
            <person name="Melnikov S."/>
            <person name="Jenner L."/>
            <person name="Yusupova G."/>
            <person name="Yusupov M."/>
        </authorList>
    </citation>
    <scope>SUBUNIT</scope>
    <scope>SUBCELLULAR LOCATION</scope>
</reference>
<reference key="8">
    <citation type="journal article" date="2012" name="Proc. Natl. Acad. Sci. U.S.A.">
        <title>N-terminal acetylome analyses and functional insights of the N-terminal acetyltransferase NatB.</title>
        <authorList>
            <person name="Van Damme P."/>
            <person name="Lasa M."/>
            <person name="Polevoda B."/>
            <person name="Gazquez C."/>
            <person name="Elosegui-Artola A."/>
            <person name="Kim D.S."/>
            <person name="De Juan-Pardo E."/>
            <person name="Demeyer K."/>
            <person name="Hole K."/>
            <person name="Larrea E."/>
            <person name="Timmerman E."/>
            <person name="Prieto J."/>
            <person name="Arnesen T."/>
            <person name="Sherman F."/>
            <person name="Gevaert K."/>
            <person name="Aldabe R."/>
        </authorList>
    </citation>
    <scope>IDENTIFICATION BY MASS SPECTROMETRY [LARGE SCALE ANALYSIS]</scope>
</reference>
<reference key="9">
    <citation type="journal article" date="2014" name="Curr. Opin. Struct. Biol.">
        <title>A new system for naming ribosomal proteins.</title>
        <authorList>
            <person name="Ban N."/>
            <person name="Beckmann R."/>
            <person name="Cate J.H.D."/>
            <person name="Dinman J.D."/>
            <person name="Dragon F."/>
            <person name="Ellis S.R."/>
            <person name="Lafontaine D.L.J."/>
            <person name="Lindahl L."/>
            <person name="Liljas A."/>
            <person name="Lipton J.M."/>
            <person name="McAlear M.A."/>
            <person name="Moore P.B."/>
            <person name="Noller H.F."/>
            <person name="Ortega J."/>
            <person name="Panse V.G."/>
            <person name="Ramakrishnan V."/>
            <person name="Spahn C.M.T."/>
            <person name="Steitz T.A."/>
            <person name="Tchorzewski M."/>
            <person name="Tollervey D."/>
            <person name="Warren A.J."/>
            <person name="Williamson J.R."/>
            <person name="Wilson D."/>
            <person name="Yonath A."/>
            <person name="Yusupov M."/>
        </authorList>
    </citation>
    <scope>NOMENCLATURE</scope>
</reference>
<evidence type="ECO:0000256" key="1">
    <source>
        <dbReference type="SAM" id="MobiDB-lite"/>
    </source>
</evidence>
<evidence type="ECO:0000269" key="2">
    <source>
    </source>
</evidence>
<evidence type="ECO:0000269" key="3">
    <source>
    </source>
</evidence>
<evidence type="ECO:0000269" key="4">
    <source>
    </source>
</evidence>
<evidence type="ECO:0000269" key="5">
    <source>
    </source>
</evidence>
<evidence type="ECO:0000303" key="6">
    <source>
    </source>
</evidence>
<evidence type="ECO:0000303" key="7">
    <source>
    </source>
</evidence>
<evidence type="ECO:0000305" key="8"/>
<evidence type="ECO:0000305" key="9">
    <source>
    </source>
</evidence>
<evidence type="ECO:0000305" key="10">
    <source>
    </source>
</evidence>
<dbReference type="EMBL" id="Z49273">
    <property type="protein sequence ID" value="CAA89270.1"/>
    <property type="molecule type" value="Genomic_DNA"/>
</dbReference>
<dbReference type="EMBL" id="BK006946">
    <property type="protein sequence ID" value="DAA10018.1"/>
    <property type="molecule type" value="Genomic_DNA"/>
</dbReference>
<dbReference type="PIR" id="S54490">
    <property type="entry name" value="S54490"/>
</dbReference>
<dbReference type="RefSeq" id="NP_013840.1">
    <property type="nucleotide sequence ID" value="NM_001182622.1"/>
</dbReference>
<dbReference type="SMR" id="P54780"/>
<dbReference type="BioGRID" id="35298">
    <property type="interactions" value="105"/>
</dbReference>
<dbReference type="ComplexPortal" id="CPX-1601">
    <property type="entry name" value="60S cytosolic large ribosomal subunit"/>
</dbReference>
<dbReference type="FunCoup" id="P54780">
    <property type="interactions" value="1497"/>
</dbReference>
<dbReference type="IntAct" id="P54780">
    <property type="interactions" value="12"/>
</dbReference>
<dbReference type="MINT" id="P54780"/>
<dbReference type="STRING" id="4932.YMR121C"/>
<dbReference type="iPTMnet" id="P54780"/>
<dbReference type="PaxDb" id="4932-YMR121C"/>
<dbReference type="PeptideAtlas" id="P54780"/>
<dbReference type="EnsemblFungi" id="YMR121C_mRNA">
    <property type="protein sequence ID" value="YMR121C"/>
    <property type="gene ID" value="YMR121C"/>
</dbReference>
<dbReference type="GeneID" id="855150"/>
<dbReference type="KEGG" id="sce:YMR121C"/>
<dbReference type="AGR" id="SGD:S000004728"/>
<dbReference type="SGD" id="S000004728">
    <property type="gene designation" value="RPL15B"/>
</dbReference>
<dbReference type="VEuPathDB" id="FungiDB:YMR121C"/>
<dbReference type="eggNOG" id="KOG1678">
    <property type="taxonomic scope" value="Eukaryota"/>
</dbReference>
<dbReference type="GeneTree" id="ENSGT00910000144184"/>
<dbReference type="HOGENOM" id="CLU_080796_0_0_1"/>
<dbReference type="InParanoid" id="P54780"/>
<dbReference type="OMA" id="HRICVRR"/>
<dbReference type="OrthoDB" id="10255148at2759"/>
<dbReference type="BioCyc" id="YEAST:G3O-32815-MONOMER"/>
<dbReference type="Reactome" id="R-SCE-156827">
    <property type="pathway name" value="L13a-mediated translational silencing of Ceruloplasmin expression"/>
</dbReference>
<dbReference type="Reactome" id="R-SCE-1799339">
    <property type="pathway name" value="SRP-dependent cotranslational protein targeting to membrane"/>
</dbReference>
<dbReference type="Reactome" id="R-SCE-72689">
    <property type="pathway name" value="Formation of a pool of free 40S subunits"/>
</dbReference>
<dbReference type="Reactome" id="R-SCE-72706">
    <property type="pathway name" value="GTP hydrolysis and joining of the 60S ribosomal subunit"/>
</dbReference>
<dbReference type="Reactome" id="R-SCE-975956">
    <property type="pathway name" value="Nonsense Mediated Decay (NMD) independent of the Exon Junction Complex (EJC)"/>
</dbReference>
<dbReference type="Reactome" id="R-SCE-975957">
    <property type="pathway name" value="Nonsense Mediated Decay (NMD) enhanced by the Exon Junction Complex (EJC)"/>
</dbReference>
<dbReference type="BioGRID-ORCS" id="855150">
    <property type="hits" value="1 hit in 10 CRISPR screens"/>
</dbReference>
<dbReference type="CD-CODE" id="BDAE0F88">
    <property type="entry name" value="Nucleolus"/>
</dbReference>
<dbReference type="PRO" id="PR:P54780"/>
<dbReference type="Proteomes" id="UP000002311">
    <property type="component" value="Chromosome XIII"/>
</dbReference>
<dbReference type="RNAct" id="P54780">
    <property type="molecule type" value="protein"/>
</dbReference>
<dbReference type="GO" id="GO:0005737">
    <property type="term" value="C:cytoplasm"/>
    <property type="evidence" value="ECO:0007005"/>
    <property type="project" value="SGD"/>
</dbReference>
<dbReference type="GO" id="GO:0005829">
    <property type="term" value="C:cytosol"/>
    <property type="evidence" value="ECO:0000304"/>
    <property type="project" value="Reactome"/>
</dbReference>
<dbReference type="GO" id="GO:0022625">
    <property type="term" value="C:cytosolic large ribosomal subunit"/>
    <property type="evidence" value="ECO:0000314"/>
    <property type="project" value="SGD"/>
</dbReference>
<dbReference type="GO" id="GO:0005730">
    <property type="term" value="C:nucleolus"/>
    <property type="evidence" value="ECO:0007005"/>
    <property type="project" value="SGD"/>
</dbReference>
<dbReference type="GO" id="GO:0005634">
    <property type="term" value="C:nucleus"/>
    <property type="evidence" value="ECO:0007005"/>
    <property type="project" value="SGD"/>
</dbReference>
<dbReference type="GO" id="GO:0003723">
    <property type="term" value="F:RNA binding"/>
    <property type="evidence" value="ECO:0000314"/>
    <property type="project" value="SGD"/>
</dbReference>
<dbReference type="GO" id="GO:0003735">
    <property type="term" value="F:structural constituent of ribosome"/>
    <property type="evidence" value="ECO:0000314"/>
    <property type="project" value="SGD"/>
</dbReference>
<dbReference type="GO" id="GO:0002181">
    <property type="term" value="P:cytoplasmic translation"/>
    <property type="evidence" value="ECO:0000314"/>
    <property type="project" value="SGD"/>
</dbReference>
<dbReference type="GO" id="GO:0016236">
    <property type="term" value="P:macroautophagy"/>
    <property type="evidence" value="ECO:0000315"/>
    <property type="project" value="SGD"/>
</dbReference>
<dbReference type="FunFam" id="3.40.1120.10:FF:000001">
    <property type="entry name" value="Ribosomal protein L15"/>
    <property type="match status" value="1"/>
</dbReference>
<dbReference type="Gene3D" id="3.40.1120.10">
    <property type="entry name" value="Ribosomal protein l15e"/>
    <property type="match status" value="1"/>
</dbReference>
<dbReference type="InterPro" id="IPR024794">
    <property type="entry name" value="Rbsml_eL15_core_dom_sf"/>
</dbReference>
<dbReference type="InterPro" id="IPR000439">
    <property type="entry name" value="Ribosomal_eL15"/>
</dbReference>
<dbReference type="InterPro" id="IPR020925">
    <property type="entry name" value="Ribosomal_eL15_CS"/>
</dbReference>
<dbReference type="InterPro" id="IPR012678">
    <property type="entry name" value="Ribosomal_uL23/eL15/eS24_sf"/>
</dbReference>
<dbReference type="NCBIfam" id="NF003269">
    <property type="entry name" value="PRK04243.1"/>
    <property type="match status" value="1"/>
</dbReference>
<dbReference type="PANTHER" id="PTHR11847:SF4">
    <property type="entry name" value="LARGE RIBOSOMAL SUBUNIT PROTEIN EL15"/>
    <property type="match status" value="1"/>
</dbReference>
<dbReference type="PANTHER" id="PTHR11847">
    <property type="entry name" value="RIBOSOMAL PROTEIN L15"/>
    <property type="match status" value="1"/>
</dbReference>
<dbReference type="Pfam" id="PF00827">
    <property type="entry name" value="Ribosomal_L15e"/>
    <property type="match status" value="1"/>
</dbReference>
<dbReference type="SMART" id="SM01384">
    <property type="entry name" value="Ribosomal_L15e"/>
    <property type="match status" value="1"/>
</dbReference>
<dbReference type="SUPFAM" id="SSF54189">
    <property type="entry name" value="Ribosomal proteins S24e, L23 and L15e"/>
    <property type="match status" value="1"/>
</dbReference>
<dbReference type="PROSITE" id="PS01194">
    <property type="entry name" value="RIBOSOMAL_L15E"/>
    <property type="match status" value="1"/>
</dbReference>
<gene>
    <name evidence="7" type="primary">RPL15B</name>
    <name type="synonym">RPL10B</name>
    <name type="synonym">RPL13B</name>
    <name type="synonym">YL10B</name>
    <name type="ordered locus">YMR121C</name>
    <name type="ORF">YM8564.03C</name>
</gene>
<keyword id="KW-0963">Cytoplasm</keyword>
<keyword id="KW-0903">Direct protein sequencing</keyword>
<keyword id="KW-1185">Reference proteome</keyword>
<keyword id="KW-0687">Ribonucleoprotein</keyword>
<keyword id="KW-0689">Ribosomal protein</keyword>
<feature type="initiator methionine" description="Removed" evidence="3 5">
    <location>
        <position position="1"/>
    </location>
</feature>
<feature type="chain" id="PRO_0000127567" description="Large ribosomal subunit protein eL15B">
    <location>
        <begin position="2"/>
        <end position="204"/>
    </location>
</feature>
<feature type="region of interest" description="Disordered" evidence="1">
    <location>
        <begin position="165"/>
        <end position="185"/>
    </location>
</feature>
<feature type="compositionally biased region" description="Basic residues" evidence="1">
    <location>
        <begin position="169"/>
        <end position="185"/>
    </location>
</feature>
<feature type="sequence conflict" description="In Ref. 3; AA sequence." evidence="8" ref="3">
    <original>W</original>
    <variation>G</variation>
    <location>
        <position position="28"/>
    </location>
</feature>
<organism>
    <name type="scientific">Saccharomyces cerevisiae (strain ATCC 204508 / S288c)</name>
    <name type="common">Baker's yeast</name>
    <dbReference type="NCBI Taxonomy" id="559292"/>
    <lineage>
        <taxon>Eukaryota</taxon>
        <taxon>Fungi</taxon>
        <taxon>Dikarya</taxon>
        <taxon>Ascomycota</taxon>
        <taxon>Saccharomycotina</taxon>
        <taxon>Saccharomycetes</taxon>
        <taxon>Saccharomycetales</taxon>
        <taxon>Saccharomycetaceae</taxon>
        <taxon>Saccharomyces</taxon>
    </lineage>
</organism>
<accession>P54780</accession>
<accession>D6VZU4</accession>
<proteinExistence type="evidence at protein level"/>
<name>RL15B_YEAST</name>